<protein>
    <recommendedName>
        <fullName>PDZ domain-containing protein 2</fullName>
    </recommendedName>
    <alternativeName>
        <fullName>Activated in prostate cancer protein</fullName>
    </alternativeName>
    <alternativeName>
        <fullName>PDZ domain-containing protein 3</fullName>
    </alternativeName>
    <component>
        <recommendedName>
            <fullName>Processed PDZ domain-containing protein 2</fullName>
        </recommendedName>
    </component>
</protein>
<organism>
    <name type="scientific">Homo sapiens</name>
    <name type="common">Human</name>
    <dbReference type="NCBI Taxonomy" id="9606"/>
    <lineage>
        <taxon>Eukaryota</taxon>
        <taxon>Metazoa</taxon>
        <taxon>Chordata</taxon>
        <taxon>Craniata</taxon>
        <taxon>Vertebrata</taxon>
        <taxon>Euteleostomi</taxon>
        <taxon>Mammalia</taxon>
        <taxon>Eutheria</taxon>
        <taxon>Euarchontoglires</taxon>
        <taxon>Primates</taxon>
        <taxon>Haplorrhini</taxon>
        <taxon>Catarrhini</taxon>
        <taxon>Hominidae</taxon>
        <taxon>Homo</taxon>
    </lineage>
</organism>
<reference key="1">
    <citation type="journal article" date="2001" name="Cancer Res.">
        <title>Activated in prostate cancer: a PDZ domain-containing protein highly expressed in human primary prostate tumors.</title>
        <authorList>
            <person name="Chaib H."/>
            <person name="Rubin M.A."/>
            <person name="Mucci N.R."/>
            <person name="Li L."/>
            <person name="Taylor J.M.G."/>
            <person name="Day M.L."/>
            <person name="Rhim J.S."/>
            <person name="Macoska J.A."/>
        </authorList>
    </citation>
    <scope>NUCLEOTIDE SEQUENCE [MRNA] (ISOFORM 2)</scope>
    <scope>TISSUE SPECIFICITY</scope>
    <scope>SUBCELLULAR LOCATION</scope>
</reference>
<reference key="2">
    <citation type="journal article" date="1997" name="DNA Res.">
        <title>Prediction of the coding sequences of unidentified human genes. VII. The complete sequences of 100 new cDNA clones from brain which can code for large proteins in vitro.</title>
        <authorList>
            <person name="Nagase T."/>
            <person name="Ishikawa K."/>
            <person name="Nakajima D."/>
            <person name="Ohira M."/>
            <person name="Seki N."/>
            <person name="Miyajima N."/>
            <person name="Tanaka A."/>
            <person name="Kotani H."/>
            <person name="Nomura N."/>
            <person name="Ohara O."/>
        </authorList>
    </citation>
    <scope>NUCLEOTIDE SEQUENCE [LARGE SCALE MRNA] (ISOFORM 1)</scope>
    <scope>VARIANT ALA-1274</scope>
    <source>
        <tissue>Brain</tissue>
    </source>
</reference>
<gene>
    <name type="primary">PDZD2</name>
    <name type="synonym">AIPC</name>
    <name type="synonym">KIAA0300</name>
    <name type="synonym">PDZK3</name>
</gene>
<accession>O15018</accession>
<accession>Q9BXD4</accession>
<comment type="subunit">
    <text evidence="1">Interacts with SCN10A, CTNND2 and PKP4.</text>
</comment>
<comment type="subcellular location">
    <subcellularLocation>
        <location evidence="2">Nucleus</location>
    </subcellularLocation>
    <subcellularLocation>
        <location evidence="5">Cytoplasm</location>
    </subcellularLocation>
    <subcellularLocation>
        <location evidence="5">Endoplasmic reticulum</location>
    </subcellularLocation>
    <text evidence="2">At cell-cell contacts in lung epithelial cells.</text>
</comment>
<comment type="subcellular location">
    <molecule>Processed PDZ domain-containing protein 2</molecule>
    <subcellularLocation>
        <location evidence="1">Secreted</location>
    </subcellularLocation>
</comment>
<comment type="alternative products">
    <event type="alternative splicing"/>
    <isoform>
        <id>O15018-1</id>
        <name>1</name>
        <sequence type="displayed"/>
    </isoform>
    <isoform>
        <id>O15018-2</id>
        <name>2</name>
        <sequence type="described" ref="VSP_012369 VSP_012370 VSP_012371 VSP_012372 VSP_012373"/>
    </isoform>
</comment>
<comment type="tissue specificity">
    <text evidence="5">Isoform 2 is expressed (at protein level) in prostate and many prostate tumors.</text>
</comment>
<comment type="PTM">
    <text evidence="1">A secreted form is produced by caspase-mediated proteolytic cleavage.</text>
</comment>
<comment type="miscellaneous">
    <molecule>Isoform 2</molecule>
    <text evidence="8">May be due to aberrant splicing.</text>
</comment>
<comment type="sequence caution" evidence="8">
    <conflict type="erroneous initiation">
        <sequence resource="EMBL-CDS" id="BAA20760"/>
    </conflict>
</comment>
<sequence>MPITQDNAVLHLPLLYQWLQNSLQEGGDGPEQRLCQAAIQKLQEYIQLNFAVDESTVPPDHSPPEMEICTVYLTKELGDTETVGLSFGNIPVFGDYGEKRRGGKKRKTHQGPVLDVGCIWVTELRKNSPAGKSGKVRLRDEILSLNGQLMVGVDVSGASYLAEQCWNGGFIYLIMLRRFKHKAHSTYNGNSSNSSEPGETPTLELGDRTAKKGKRTRKFGVISRPPANKAPEESKGSAGCEVSSDPSTELENGPDPELGNGHVFQLENGPDSLKEVAGPHLERSEVDRGTEHRIPKTDAPLTTSNDKRRFSKGGKTDFQSSDCLAREEVGRIWKMELLKESDGLGIQVSGGRGSKRSPHAIVVTQVKEGGAAHRDGRLSLGDELLVINGHLLVGLSHEEAVAILRSATGMVQLVVASKENSAEDLLRLTSKSLPDLTSSVEDVSSWTDNEDQEADGEEDEGTSSSVQRAMPGTDEPQDVCGAEESKGNLESPKQGSNKIKLKSRLSGGVHRLESVEEYNELMVRNGDPRIRMLEVSRDGRKHSLPQLLDSSSASQEYHIVKKSTRSLSTTQVESPWRLIRPSVISIIGLYKEKGKGLGFSIAGGRDCIRGQMGIFVKTIFPNGSAAEDGRLKEGDEILDVNGIPIKGLTFQEAIHTFKQIRSGLFVLTVRTKLVSPSLTPCSTPTHMSRSASPNFNTSGGASAGGSDEGSSSSLGRKTPGPKDRIVMEVTLNKEPRVGLGIGACCLALENSPPGIYIHSLAPGSVAKMESNLSRGDQILEVNSVNVRHAALSKVHAILSKCPPGPVRLVIGRHPNPKVSEQEMDEVIARSTYQESKEANSSPGLGTPLKSPSLAKKDSLISESELSQYFAHDVPGPLSDFMVAGSEDEDHPGSGCSTSEEGSLPPSTSTHKEPGKPRANSLVTLGSHRASGLFHKQVTVARQASLPGSPQALRNPLLRQRKVGCYDANDASDEEEFDREGDCISLPGALPGPIRPLSEDDPRRVSISSSKGMDVHNQEERPRKTLVSKAISAPLLGSSVDLEESIPEGMVDAASYAANLTDSAEAPKGSPGSWWKKELSGSSSAPKLEYTVRTDTQSPTNTGSPSSPQQKSEGLGSRHRPVARVSPHCKRSEAEAKPSGSQTVNLTGRANDPCDLDSRVQATSVKVTVAGFQPGGAVEKESLGKLTTGDACVSTSCELASALSHLDASHLTENLPKAASELGQQPMTELDSSSDLISSPGKKGAAHPDPSKTSVDTGQVSRPENPSQPASPRVTKCKARSPVRLPHEGSPSPGEKAAAPPDYSKTRSASETSTPHNTRRVAALRGAGPGAEGMTPAGAVLPGDPLTSQEQRQGAPGNHSKALEMTGIHAPESSQEPSLLEGADSVSSRAPQASLSMLPSTDNTKEACGHVSGHCCPGGSRESPVTDIDSFIKELDASAARSPSSQTGDSGSQEGSAQGHPPAGAGGGSSCRAEPVPGGQTSSPRRAWAAGAPAYPQWASQPSVLDSINPDKHFTVNKNFLSNYSRNFSSFHEDSTSLSGLGDSTEPSLSSMYGDAEDSSSDPESLTEAPRASARDGWSPPRSRVSLHKEDPSESEEEQIEICSTRGCPNPPSSPAHLPTQAAICPASAKVLSLKYSTPRESVASPREKAACLPGSYTSGPDSSQPSSLLEMSSQEHETHADISTSQNHRPSCAEETTEVTSASSAMENSPLSKVARHFHSPPIILSSPNMVNGLEHDLLDDETLNQYETSINAAASLSSFSVDVPKNGESVLENLHISESQDLDDLLQKPKMIARRPIMAWFKEINKHNQGTHLRSKTEKEQPLMPARSPDSKIQMVSSSQKKGVTVPHSPPQPKTNLENKDLSKKSPAEMLLTNGQKAKCGPKLKRLSLKGKAKVNSEAPAANAVKAGGTDHRKPLISPQTSHKTLSKAVSQRLHVADHEDPDRNTTAAPRSPQCVLESKPPLATSGPLKPSVSDTSIRTFVSPLTSPKPVPEQGMWSRFHMAVLSEPDRGCPTTPKSPKCRAEGRAPRADSGPVSPAASRNGMSVAGNRQSEPRLASHVAADTAQPRPTGEKGGNIMASDRLERTNQLKIVEISAEAVSETVCGNKPAESDRRGGCLAQGNCQEKSEIRLYRQVAESSTSHPSSLPSHASQAEQEMSRSFSMAKLASSSSSLQTAIRKAEYSQGKSSLMSDSRGVPRNSIPGGPSGEDHLYFTPRPATRTYSMPAQFSSHFGREGHPPHSLGRSRDSQVPVTSSVVPEAKASRGGLPSLANGQGIYSVKPLLDTSRNLPATDEGDIISVQETSCLVTDKIKVTRRHYCYEQNWPHESTSFFSVKQRIKSFENLANADRPVAKSGASPFLSVSSKPPIGRRSSGSIVSGSLGHPGDAAARLLRRSLSSCSENQSEAGTLLPQMAKSPSIMTLTISRQNPPETSSKGSDSELKKSLGPLGIPTPTMTLASPVKRNKSSVRHTQPSPVSRSKLQELRALSMPDLDKLCSEDYSAGPSAVLFKTELEITPRRSPGPPAGGVSCPEKGGNRACPGGSGPKTSAAETPSSASDTGEAAQDLPFRRSWSVNLDQLLVSAGDQQRLQSVLSSVGSKSTILTLIQEAKAQSENEEDVCFIVLNRKEGSGLGFSVAGGTDVEPKSITVHRVFSQGAASQEGTMNRGDFLLSVNGASLAGLAHGNVLKVLHQAQLHKDALVVIKKGMDQPRPSARQEPPTANGKGLLSRKTIPLEPGIGRSVAVHDALCVEVLKTSAGLGLSLDGGKSSVTGDGPLVIKRVYKGGAAEQAGIIEAGDEILAINGKPLVGLMHFDAWNIMKSVPEGPVQLLIRKHRNSS</sequence>
<dbReference type="EMBL" id="AF338650">
    <property type="protein sequence ID" value="AAK07661.1"/>
    <property type="molecule type" value="mRNA"/>
</dbReference>
<dbReference type="EMBL" id="AB002298">
    <property type="protein sequence ID" value="BAA20760.2"/>
    <property type="status" value="ALT_INIT"/>
    <property type="molecule type" value="mRNA"/>
</dbReference>
<dbReference type="CCDS" id="CCDS34137.1">
    <molecule id="O15018-1"/>
</dbReference>
<dbReference type="RefSeq" id="NP_835260.2">
    <molecule id="O15018-1"/>
    <property type="nucleotide sequence ID" value="NM_178140.4"/>
</dbReference>
<dbReference type="RefSeq" id="XP_011512297.1">
    <property type="nucleotide sequence ID" value="XM_011513995.2"/>
</dbReference>
<dbReference type="SMR" id="O15018"/>
<dbReference type="BioGRID" id="116676">
    <property type="interactions" value="23"/>
</dbReference>
<dbReference type="FunCoup" id="O15018">
    <property type="interactions" value="633"/>
</dbReference>
<dbReference type="IntAct" id="O15018">
    <property type="interactions" value="6"/>
</dbReference>
<dbReference type="MINT" id="O15018"/>
<dbReference type="STRING" id="9606.ENSP00000402033"/>
<dbReference type="GlyCosmos" id="O15018">
    <property type="glycosylation" value="2 sites, 1 glycan"/>
</dbReference>
<dbReference type="GlyGen" id="O15018">
    <property type="glycosylation" value="5 sites, 5 N-linked glycans (2 sites), 1 O-linked glycan (3 sites)"/>
</dbReference>
<dbReference type="iPTMnet" id="O15018"/>
<dbReference type="PhosphoSitePlus" id="O15018"/>
<dbReference type="BioMuta" id="PDZD2"/>
<dbReference type="MassIVE" id="O15018"/>
<dbReference type="PaxDb" id="9606-ENSP00000402033"/>
<dbReference type="PeptideAtlas" id="O15018"/>
<dbReference type="ProteomicsDB" id="48374">
    <molecule id="O15018-1"/>
</dbReference>
<dbReference type="ProteomicsDB" id="48375">
    <molecule id="O15018-2"/>
</dbReference>
<dbReference type="Antibodypedia" id="22684">
    <property type="antibodies" value="155 antibodies from 31 providers"/>
</dbReference>
<dbReference type="DNASU" id="23037"/>
<dbReference type="Ensembl" id="ENST00000438447.2">
    <molecule id="O15018-1"/>
    <property type="protein sequence ID" value="ENSP00000402033.1"/>
    <property type="gene ID" value="ENSG00000133401.16"/>
</dbReference>
<dbReference type="GeneID" id="23037"/>
<dbReference type="KEGG" id="hsa:23037"/>
<dbReference type="MANE-Select" id="ENST00000438447.2">
    <property type="protein sequence ID" value="ENSP00000402033.1"/>
    <property type="RefSeq nucleotide sequence ID" value="NM_178140.4"/>
    <property type="RefSeq protein sequence ID" value="NP_835260.2"/>
</dbReference>
<dbReference type="UCSC" id="uc003jhl.4">
    <molecule id="O15018-1"/>
    <property type="organism name" value="human"/>
</dbReference>
<dbReference type="AGR" id="HGNC:18486"/>
<dbReference type="CTD" id="23037"/>
<dbReference type="DisGeNET" id="23037"/>
<dbReference type="GeneCards" id="PDZD2"/>
<dbReference type="HGNC" id="HGNC:18486">
    <property type="gene designation" value="PDZD2"/>
</dbReference>
<dbReference type="HPA" id="ENSG00000133401">
    <property type="expression patterns" value="Tissue enhanced (heart)"/>
</dbReference>
<dbReference type="MalaCards" id="PDZD2"/>
<dbReference type="MIM" id="610697">
    <property type="type" value="gene"/>
</dbReference>
<dbReference type="neXtProt" id="NX_O15018"/>
<dbReference type="OpenTargets" id="ENSG00000133401"/>
<dbReference type="PharmGKB" id="PA33164"/>
<dbReference type="VEuPathDB" id="HostDB:ENSG00000133401"/>
<dbReference type="eggNOG" id="KOG0708">
    <property type="taxonomic scope" value="Eukaryota"/>
</dbReference>
<dbReference type="eggNOG" id="KOG3528">
    <property type="taxonomic scope" value="Eukaryota"/>
</dbReference>
<dbReference type="GeneTree" id="ENSGT00940000157749"/>
<dbReference type="HOGENOM" id="CLU_000714_0_0_1"/>
<dbReference type="InParanoid" id="O15018"/>
<dbReference type="OMA" id="QEGTMSR"/>
<dbReference type="OrthoDB" id="42382at2759"/>
<dbReference type="PAN-GO" id="O15018">
    <property type="GO annotations" value="0 GO annotations based on evolutionary models"/>
</dbReference>
<dbReference type="PhylomeDB" id="O15018"/>
<dbReference type="TreeFam" id="TF326303"/>
<dbReference type="PathwayCommons" id="O15018"/>
<dbReference type="SignaLink" id="O15018"/>
<dbReference type="BioGRID-ORCS" id="23037">
    <property type="hits" value="8 hits in 1154 CRISPR screens"/>
</dbReference>
<dbReference type="ChiTaRS" id="PDZD2">
    <property type="organism name" value="human"/>
</dbReference>
<dbReference type="GeneWiki" id="PDZD2"/>
<dbReference type="GenomeRNAi" id="23037"/>
<dbReference type="Pharos" id="O15018">
    <property type="development level" value="Tbio"/>
</dbReference>
<dbReference type="PRO" id="PR:O15018"/>
<dbReference type="Proteomes" id="UP000005640">
    <property type="component" value="Chromosome 5"/>
</dbReference>
<dbReference type="RNAct" id="O15018">
    <property type="molecule type" value="protein"/>
</dbReference>
<dbReference type="Bgee" id="ENSG00000133401">
    <property type="expression patterns" value="Expressed in trigeminal ganglion and 202 other cell types or tissues"/>
</dbReference>
<dbReference type="ExpressionAtlas" id="O15018">
    <property type="expression patterns" value="baseline and differential"/>
</dbReference>
<dbReference type="GO" id="GO:0005911">
    <property type="term" value="C:cell-cell junction"/>
    <property type="evidence" value="ECO:0000250"/>
    <property type="project" value="UniProtKB"/>
</dbReference>
<dbReference type="GO" id="GO:0034451">
    <property type="term" value="C:centriolar satellite"/>
    <property type="evidence" value="ECO:0000314"/>
    <property type="project" value="HPA"/>
</dbReference>
<dbReference type="GO" id="GO:0005737">
    <property type="term" value="C:cytoplasm"/>
    <property type="evidence" value="ECO:0000314"/>
    <property type="project" value="UniProtKB"/>
</dbReference>
<dbReference type="GO" id="GO:0005829">
    <property type="term" value="C:cytosol"/>
    <property type="evidence" value="ECO:0000314"/>
    <property type="project" value="HPA"/>
</dbReference>
<dbReference type="GO" id="GO:0005783">
    <property type="term" value="C:endoplasmic reticulum"/>
    <property type="evidence" value="ECO:0000250"/>
    <property type="project" value="UniProtKB"/>
</dbReference>
<dbReference type="GO" id="GO:0005576">
    <property type="term" value="C:extracellular region"/>
    <property type="evidence" value="ECO:0000250"/>
    <property type="project" value="UniProtKB"/>
</dbReference>
<dbReference type="GO" id="GO:0043231">
    <property type="term" value="C:intracellular membrane-bounded organelle"/>
    <property type="evidence" value="ECO:0000314"/>
    <property type="project" value="HPA"/>
</dbReference>
<dbReference type="GO" id="GO:0005634">
    <property type="term" value="C:nucleus"/>
    <property type="evidence" value="ECO:0000250"/>
    <property type="project" value="UniProtKB"/>
</dbReference>
<dbReference type="GO" id="GO:0005886">
    <property type="term" value="C:plasma membrane"/>
    <property type="evidence" value="ECO:0000314"/>
    <property type="project" value="HPA"/>
</dbReference>
<dbReference type="GO" id="GO:0007155">
    <property type="term" value="P:cell adhesion"/>
    <property type="evidence" value="ECO:0007669"/>
    <property type="project" value="UniProtKB-KW"/>
</dbReference>
<dbReference type="CDD" id="cd23061">
    <property type="entry name" value="PDZ1_PDZD2-like"/>
    <property type="match status" value="1"/>
</dbReference>
<dbReference type="CDD" id="cd06758">
    <property type="entry name" value="PDZ2_PDZD2-like"/>
    <property type="match status" value="1"/>
</dbReference>
<dbReference type="CDD" id="cd06759">
    <property type="entry name" value="PDZ3_PDZD2-PDZ1_hPro-IL-16-like"/>
    <property type="match status" value="1"/>
</dbReference>
<dbReference type="CDD" id="cd06760">
    <property type="entry name" value="PDZ4_PDZD2-PDZ2_hPro-IL-16-like"/>
    <property type="match status" value="1"/>
</dbReference>
<dbReference type="CDD" id="cd06761">
    <property type="entry name" value="PDZ5_PDZD2-like"/>
    <property type="match status" value="1"/>
</dbReference>
<dbReference type="CDD" id="cd06762">
    <property type="entry name" value="PDZ6_PDZD2-PDZ3_hPro-IL-16-like"/>
    <property type="match status" value="1"/>
</dbReference>
<dbReference type="CDD" id="cd06763">
    <property type="entry name" value="PDZ7_PDZD2-PDZ4_hPro-IL-16-like"/>
    <property type="match status" value="1"/>
</dbReference>
<dbReference type="FunFam" id="2.30.42.10:FF:000180">
    <property type="entry name" value="PDZ domain containing 2"/>
    <property type="match status" value="1"/>
</dbReference>
<dbReference type="FunFam" id="2.30.42.10:FF:000188">
    <property type="entry name" value="PDZ domain containing 2"/>
    <property type="match status" value="1"/>
</dbReference>
<dbReference type="FunFam" id="2.30.42.10:FF:000217">
    <property type="entry name" value="PDZ domain containing 2"/>
    <property type="match status" value="1"/>
</dbReference>
<dbReference type="FunFam" id="2.30.42.10:FF:000218">
    <property type="entry name" value="PDZ domain containing 2"/>
    <property type="match status" value="1"/>
</dbReference>
<dbReference type="FunFam" id="2.30.42.10:FF:000227">
    <property type="entry name" value="PDZ domain containing 2"/>
    <property type="match status" value="1"/>
</dbReference>
<dbReference type="FunFam" id="2.30.42.10:FF:000102">
    <property type="entry name" value="Putative pro-interleukin-16"/>
    <property type="match status" value="1"/>
</dbReference>
<dbReference type="Gene3D" id="2.30.42.10">
    <property type="match status" value="6"/>
</dbReference>
<dbReference type="InterPro" id="IPR001478">
    <property type="entry name" value="PDZ"/>
</dbReference>
<dbReference type="InterPro" id="IPR036034">
    <property type="entry name" value="PDZ_sf"/>
</dbReference>
<dbReference type="PANTHER" id="PTHR11324">
    <property type="entry name" value="IL16-RELATED"/>
    <property type="match status" value="1"/>
</dbReference>
<dbReference type="PANTHER" id="PTHR11324:SF16">
    <property type="entry name" value="PDZ DOMAIN-CONTAINING PROTEIN 2"/>
    <property type="match status" value="1"/>
</dbReference>
<dbReference type="Pfam" id="PF00595">
    <property type="entry name" value="PDZ"/>
    <property type="match status" value="5"/>
</dbReference>
<dbReference type="SMART" id="SM00228">
    <property type="entry name" value="PDZ"/>
    <property type="match status" value="6"/>
</dbReference>
<dbReference type="SUPFAM" id="SSF50156">
    <property type="entry name" value="PDZ domain-like"/>
    <property type="match status" value="6"/>
</dbReference>
<dbReference type="PROSITE" id="PS50106">
    <property type="entry name" value="PDZ"/>
    <property type="match status" value="6"/>
</dbReference>
<feature type="chain" id="PRO_0000058294" description="PDZ domain-containing protein 2">
    <location>
        <begin position="1"/>
        <end position="2839"/>
    </location>
</feature>
<feature type="chain" id="PRO_0000302756" description="Processed PDZ domain-containing protein 2" evidence="1">
    <location>
        <begin position="2493" status="uncertain"/>
        <end position="2839"/>
    </location>
</feature>
<feature type="domain" description="PDZ 1" evidence="3">
    <location>
        <begin position="85"/>
        <end position="182"/>
    </location>
</feature>
<feature type="domain" description="PDZ 2" evidence="3">
    <location>
        <begin position="334"/>
        <end position="419"/>
    </location>
</feature>
<feature type="domain" description="PDZ 3" evidence="3">
    <location>
        <begin position="586"/>
        <end position="672"/>
    </location>
</feature>
<feature type="domain" description="PDZ 4" evidence="3">
    <location>
        <begin position="728"/>
        <end position="813"/>
    </location>
</feature>
<feature type="domain" description="PDZ 5" evidence="3">
    <location>
        <begin position="2622"/>
        <end position="2706"/>
    </location>
</feature>
<feature type="domain" description="PDZ 6" evidence="3">
    <location>
        <begin position="2750"/>
        <end position="2835"/>
    </location>
</feature>
<feature type="region of interest" description="Disordered" evidence="4">
    <location>
        <begin position="185"/>
        <end position="318"/>
    </location>
</feature>
<feature type="region of interest" description="Disordered" evidence="4">
    <location>
        <begin position="437"/>
        <end position="501"/>
    </location>
</feature>
<feature type="region of interest" description="Disordered" evidence="4">
    <location>
        <begin position="678"/>
        <end position="723"/>
    </location>
</feature>
<feature type="region of interest" description="Disordered" evidence="4">
    <location>
        <begin position="832"/>
        <end position="852"/>
    </location>
</feature>
<feature type="region of interest" description="Disordered" evidence="4">
    <location>
        <begin position="879"/>
        <end position="921"/>
    </location>
</feature>
<feature type="region of interest" description="Disordered" evidence="4">
    <location>
        <begin position="984"/>
        <end position="1033"/>
    </location>
</feature>
<feature type="region of interest" description="Disordered" evidence="4">
    <location>
        <begin position="1062"/>
        <end position="1155"/>
    </location>
</feature>
<feature type="region of interest" description="Disordered" evidence="4">
    <location>
        <begin position="1216"/>
        <end position="1493"/>
    </location>
</feature>
<feature type="region of interest" description="Disordered" evidence="4">
    <location>
        <begin position="1530"/>
        <end position="1620"/>
    </location>
</feature>
<feature type="region of interest" description="Disordered" evidence="4">
    <location>
        <begin position="1638"/>
        <end position="1712"/>
    </location>
</feature>
<feature type="region of interest" description="Disordered" evidence="4">
    <location>
        <begin position="1809"/>
        <end position="1865"/>
    </location>
</feature>
<feature type="region of interest" description="Disordered" evidence="4">
    <location>
        <begin position="1892"/>
        <end position="1976"/>
    </location>
</feature>
<feature type="region of interest" description="Disordered" evidence="4">
    <location>
        <begin position="2009"/>
        <end position="2079"/>
    </location>
</feature>
<feature type="region of interest" description="Disordered" evidence="4">
    <location>
        <begin position="2135"/>
        <end position="2166"/>
    </location>
</feature>
<feature type="region of interest" description="Disordered" evidence="4">
    <location>
        <begin position="2178"/>
        <end position="2211"/>
    </location>
</feature>
<feature type="region of interest" description="Disordered" evidence="4">
    <location>
        <begin position="2232"/>
        <end position="2251"/>
    </location>
</feature>
<feature type="region of interest" description="Disordered" evidence="4">
    <location>
        <begin position="2353"/>
        <end position="2383"/>
    </location>
</feature>
<feature type="region of interest" description="Disordered" evidence="4">
    <location>
        <begin position="2426"/>
        <end position="2481"/>
    </location>
</feature>
<feature type="region of interest" description="Disordered" evidence="4">
    <location>
        <begin position="2516"/>
        <end position="2564"/>
    </location>
</feature>
<feature type="region of interest" description="Disordered" evidence="4">
    <location>
        <begin position="2709"/>
        <end position="2729"/>
    </location>
</feature>
<feature type="compositionally biased region" description="Low complexity" evidence="4">
    <location>
        <begin position="189"/>
        <end position="202"/>
    </location>
</feature>
<feature type="compositionally biased region" description="Basic and acidic residues" evidence="4">
    <location>
        <begin position="280"/>
        <end position="296"/>
    </location>
</feature>
<feature type="compositionally biased region" description="Polar residues" evidence="4">
    <location>
        <begin position="437"/>
        <end position="447"/>
    </location>
</feature>
<feature type="compositionally biased region" description="Acidic residues" evidence="4">
    <location>
        <begin position="448"/>
        <end position="461"/>
    </location>
</feature>
<feature type="compositionally biased region" description="Polar residues" evidence="4">
    <location>
        <begin position="678"/>
        <end position="697"/>
    </location>
</feature>
<feature type="compositionally biased region" description="Polar residues" evidence="4">
    <location>
        <begin position="832"/>
        <end position="843"/>
    </location>
</feature>
<feature type="compositionally biased region" description="Polar residues" evidence="4">
    <location>
        <begin position="894"/>
        <end position="908"/>
    </location>
</feature>
<feature type="compositionally biased region" description="Basic and acidic residues" evidence="4">
    <location>
        <begin position="1012"/>
        <end position="1022"/>
    </location>
</feature>
<feature type="compositionally biased region" description="Polar residues" evidence="4">
    <location>
        <begin position="1092"/>
        <end position="1111"/>
    </location>
</feature>
<feature type="compositionally biased region" description="Polar residues" evidence="4">
    <location>
        <begin position="1138"/>
        <end position="1147"/>
    </location>
</feature>
<feature type="compositionally biased region" description="Polar residues" evidence="4">
    <location>
        <begin position="1221"/>
        <end position="1236"/>
    </location>
</feature>
<feature type="compositionally biased region" description="Polar residues" evidence="4">
    <location>
        <begin position="1250"/>
        <end position="1269"/>
    </location>
</feature>
<feature type="compositionally biased region" description="Polar residues" evidence="4">
    <location>
        <begin position="1305"/>
        <end position="1315"/>
    </location>
</feature>
<feature type="compositionally biased region" description="Polar residues" evidence="4">
    <location>
        <begin position="1384"/>
        <end position="1401"/>
    </location>
</feature>
<feature type="compositionally biased region" description="Polar residues" evidence="4">
    <location>
        <begin position="1440"/>
        <end position="1453"/>
    </location>
</feature>
<feature type="compositionally biased region" description="Low complexity" evidence="4">
    <location>
        <begin position="1662"/>
        <end position="1672"/>
    </location>
</feature>
<feature type="compositionally biased region" description="Polar residues" evidence="4">
    <location>
        <begin position="1698"/>
        <end position="1711"/>
    </location>
</feature>
<feature type="compositionally biased region" description="Polar residues" evidence="4">
    <location>
        <begin position="1919"/>
        <end position="1931"/>
    </location>
</feature>
<feature type="compositionally biased region" description="Basic and acidic residues" evidence="4">
    <location>
        <begin position="1936"/>
        <end position="1945"/>
    </location>
</feature>
<feature type="compositionally biased region" description="Low complexity" evidence="4">
    <location>
        <begin position="2139"/>
        <end position="2152"/>
    </location>
</feature>
<feature type="compositionally biased region" description="Low complexity" evidence="4">
    <location>
        <begin position="2370"/>
        <end position="2383"/>
    </location>
</feature>
<feature type="compositionally biased region" description="Polar residues" evidence="4">
    <location>
        <begin position="2426"/>
        <end position="2437"/>
    </location>
</feature>
<feature type="compositionally biased region" description="Polar residues" evidence="4">
    <location>
        <begin position="2470"/>
        <end position="2480"/>
    </location>
</feature>
<feature type="compositionally biased region" description="Polar residues" evidence="4">
    <location>
        <begin position="2546"/>
        <end position="2559"/>
    </location>
</feature>
<feature type="site" description="Cleavage; by caspases" evidence="1">
    <location>
        <begin position="2492"/>
        <end position="2493"/>
    </location>
</feature>
<feature type="modified residue" description="Phosphoserine" evidence="2">
    <location>
        <position position="568"/>
    </location>
</feature>
<feature type="modified residue" description="Phosphoserine" evidence="2">
    <location>
        <position position="944"/>
    </location>
</feature>
<feature type="modified residue" description="Phosphoserine" evidence="2">
    <location>
        <position position="948"/>
    </location>
</feature>
<feature type="modified residue" description="Phosphoserine" evidence="2">
    <location>
        <position position="1850"/>
    </location>
</feature>
<feature type="splice variant" id="VSP_012369" description="In isoform 2." evidence="7">
    <location>
        <begin position="375"/>
        <end position="555"/>
    </location>
</feature>
<feature type="splice variant" id="VSP_012370" description="In isoform 2." evidence="7">
    <location>
        <begin position="803"/>
        <end position="817"/>
    </location>
</feature>
<feature type="splice variant" id="VSP_012371" description="In isoform 2." evidence="7">
    <original>THK</original>
    <variation>S</variation>
    <location>
        <begin position="909"/>
        <end position="911"/>
    </location>
</feature>
<feature type="splice variant" id="VSP_012372" description="In isoform 2." evidence="7">
    <original>K</original>
    <variation>KLCQ</variation>
    <location>
        <position position="1179"/>
    </location>
</feature>
<feature type="splice variant" id="VSP_012373" description="In isoform 2." evidence="7">
    <location>
        <begin position="1228"/>
        <end position="1231"/>
    </location>
</feature>
<feature type="sequence variant" id="VAR_061691" description="In dbSNP:rs57158698.">
    <original>E</original>
    <variation>G</variation>
    <location>
        <position position="1178"/>
    </location>
</feature>
<feature type="sequence variant" id="VAR_031654" description="In dbSNP:rs3101878.">
    <original>Q</original>
    <variation>K</variation>
    <location>
        <position position="1258"/>
    </location>
</feature>
<feature type="sequence variant" id="VAR_031655" description="In dbSNP:rs157496." evidence="6">
    <original>T</original>
    <variation>A</variation>
    <location>
        <position position="1274"/>
    </location>
</feature>
<feature type="sequence variant" id="VAR_031656" description="In dbSNP:rs12520467.">
    <original>D</original>
    <variation>E</variation>
    <location>
        <position position="1343"/>
    </location>
</feature>
<feature type="sequence variant" id="VAR_031657" description="In dbSNP:rs36097367.">
    <original>T</original>
    <variation>M</variation>
    <location>
        <position position="1425"/>
    </location>
</feature>
<feature type="sequence variant" id="VAR_031658" description="In dbSNP:rs3101873.">
    <original>A</original>
    <variation>V</variation>
    <location>
        <position position="1649"/>
    </location>
</feature>
<feature type="sequence variant" id="VAR_031659" description="In dbSNP:rs10066063.">
    <original>R</original>
    <variation>Q</variation>
    <location>
        <position position="2247"/>
    </location>
</feature>
<feature type="sequence conflict" description="In Ref. 1; AAK07661." evidence="8" ref="1">
    <original>P</original>
    <variation>A</variation>
    <location>
        <position position="254"/>
    </location>
</feature>
<feature type="sequence conflict" description="In Ref. 1; AAK07661." evidence="8" ref="1">
    <original>R</original>
    <variation>RQ</variation>
    <location>
        <position position="326"/>
    </location>
</feature>
<feature type="sequence conflict" description="In Ref. 1; AAK07661." evidence="8" ref="1">
    <original>N</original>
    <variation>K</variation>
    <location>
        <position position="2576"/>
    </location>
</feature>
<evidence type="ECO:0000250" key="1"/>
<evidence type="ECO:0000250" key="2">
    <source>
        <dbReference type="UniProtKB" id="Q9QZR8"/>
    </source>
</evidence>
<evidence type="ECO:0000255" key="3">
    <source>
        <dbReference type="PROSITE-ProRule" id="PRU00143"/>
    </source>
</evidence>
<evidence type="ECO:0000256" key="4">
    <source>
        <dbReference type="SAM" id="MobiDB-lite"/>
    </source>
</evidence>
<evidence type="ECO:0000269" key="5">
    <source>
    </source>
</evidence>
<evidence type="ECO:0000269" key="6">
    <source>
    </source>
</evidence>
<evidence type="ECO:0000303" key="7">
    <source>
    </source>
</evidence>
<evidence type="ECO:0000305" key="8"/>
<name>PDZD2_HUMAN</name>
<proteinExistence type="evidence at protein level"/>
<keyword id="KW-0025">Alternative splicing</keyword>
<keyword id="KW-0130">Cell adhesion</keyword>
<keyword id="KW-0963">Cytoplasm</keyword>
<keyword id="KW-0256">Endoplasmic reticulum</keyword>
<keyword id="KW-0539">Nucleus</keyword>
<keyword id="KW-0597">Phosphoprotein</keyword>
<keyword id="KW-1267">Proteomics identification</keyword>
<keyword id="KW-1185">Reference proteome</keyword>
<keyword id="KW-0677">Repeat</keyword>
<keyword id="KW-0964">Secreted</keyword>